<keyword id="KW-0547">Nucleotide-binding</keyword>
<keyword id="KW-1185">Reference proteome</keyword>
<comment type="function">
    <text evidence="1">Nucleotide-binding protein.</text>
</comment>
<comment type="similarity">
    <text evidence="1">Belongs to the YajQ family.</text>
</comment>
<gene>
    <name type="ordered locus">Mmc1_1670</name>
</gene>
<name>Y1670_MAGMM</name>
<proteinExistence type="inferred from homology"/>
<accession>A0L886</accession>
<feature type="chain" id="PRO_1000051737" description="Nucleotide-binding protein Mmc1_1670">
    <location>
        <begin position="1"/>
        <end position="161"/>
    </location>
</feature>
<protein>
    <recommendedName>
        <fullName evidence="1">Nucleotide-binding protein Mmc1_1670</fullName>
    </recommendedName>
</protein>
<dbReference type="EMBL" id="CP000471">
    <property type="protein sequence ID" value="ABK44179.1"/>
    <property type="molecule type" value="Genomic_DNA"/>
</dbReference>
<dbReference type="RefSeq" id="WP_011713327.1">
    <property type="nucleotide sequence ID" value="NC_008576.1"/>
</dbReference>
<dbReference type="SMR" id="A0L886"/>
<dbReference type="STRING" id="156889.Mmc1_1670"/>
<dbReference type="KEGG" id="mgm:Mmc1_1670"/>
<dbReference type="eggNOG" id="COG1666">
    <property type="taxonomic scope" value="Bacteria"/>
</dbReference>
<dbReference type="HOGENOM" id="CLU_099839_1_0_5"/>
<dbReference type="OrthoDB" id="9801447at2"/>
<dbReference type="Proteomes" id="UP000002586">
    <property type="component" value="Chromosome"/>
</dbReference>
<dbReference type="GO" id="GO:0005829">
    <property type="term" value="C:cytosol"/>
    <property type="evidence" value="ECO:0007669"/>
    <property type="project" value="TreeGrafter"/>
</dbReference>
<dbReference type="GO" id="GO:0000166">
    <property type="term" value="F:nucleotide binding"/>
    <property type="evidence" value="ECO:0007669"/>
    <property type="project" value="TreeGrafter"/>
</dbReference>
<dbReference type="CDD" id="cd11740">
    <property type="entry name" value="YajQ_like"/>
    <property type="match status" value="1"/>
</dbReference>
<dbReference type="FunFam" id="3.30.70.860:FF:000001">
    <property type="entry name" value="UPF0234 protein YajQ"/>
    <property type="match status" value="1"/>
</dbReference>
<dbReference type="Gene3D" id="3.30.70.860">
    <property type="match status" value="1"/>
</dbReference>
<dbReference type="Gene3D" id="3.30.70.990">
    <property type="entry name" value="YajQ-like, domain 2"/>
    <property type="match status" value="1"/>
</dbReference>
<dbReference type="HAMAP" id="MF_00632">
    <property type="entry name" value="YajQ"/>
    <property type="match status" value="1"/>
</dbReference>
<dbReference type="InterPro" id="IPR007551">
    <property type="entry name" value="DUF520"/>
</dbReference>
<dbReference type="InterPro" id="IPR035571">
    <property type="entry name" value="UPF0234-like_C"/>
</dbReference>
<dbReference type="InterPro" id="IPR035570">
    <property type="entry name" value="UPF0234_N"/>
</dbReference>
<dbReference type="InterPro" id="IPR036183">
    <property type="entry name" value="YajQ-like_sf"/>
</dbReference>
<dbReference type="NCBIfam" id="NF003819">
    <property type="entry name" value="PRK05412.1"/>
    <property type="match status" value="1"/>
</dbReference>
<dbReference type="PANTHER" id="PTHR30476">
    <property type="entry name" value="UPF0234 PROTEIN YAJQ"/>
    <property type="match status" value="1"/>
</dbReference>
<dbReference type="PANTHER" id="PTHR30476:SF0">
    <property type="entry name" value="UPF0234 PROTEIN YAJQ"/>
    <property type="match status" value="1"/>
</dbReference>
<dbReference type="Pfam" id="PF04461">
    <property type="entry name" value="DUF520"/>
    <property type="match status" value="1"/>
</dbReference>
<dbReference type="SUPFAM" id="SSF89963">
    <property type="entry name" value="YajQ-like"/>
    <property type="match status" value="2"/>
</dbReference>
<reference key="1">
    <citation type="journal article" date="2009" name="Appl. Environ. Microbiol.">
        <title>Complete genome sequence of the chemolithoautotrophic marine magnetotactic coccus strain MC-1.</title>
        <authorList>
            <person name="Schubbe S."/>
            <person name="Williams T.J."/>
            <person name="Xie G."/>
            <person name="Kiss H.E."/>
            <person name="Brettin T.S."/>
            <person name="Martinez D."/>
            <person name="Ross C.A."/>
            <person name="Schuler D."/>
            <person name="Cox B.L."/>
            <person name="Nealson K.H."/>
            <person name="Bazylinski D.A."/>
        </authorList>
    </citation>
    <scope>NUCLEOTIDE SEQUENCE [LARGE SCALE GENOMIC DNA]</scope>
    <source>
        <strain>ATCC BAA-1437 / JCM 17883 / MC-1</strain>
    </source>
</reference>
<organism>
    <name type="scientific">Magnetococcus marinus (strain ATCC BAA-1437 / JCM 17883 / MC-1)</name>
    <dbReference type="NCBI Taxonomy" id="156889"/>
    <lineage>
        <taxon>Bacteria</taxon>
        <taxon>Pseudomonadati</taxon>
        <taxon>Pseudomonadota</taxon>
        <taxon>Alphaproteobacteria</taxon>
        <taxon>Magnetococcales</taxon>
        <taxon>Magnetococcaceae</taxon>
        <taxon>Magnetococcus</taxon>
    </lineage>
</organism>
<evidence type="ECO:0000255" key="1">
    <source>
        <dbReference type="HAMAP-Rule" id="MF_00632"/>
    </source>
</evidence>
<sequence length="161" mass="18076">MPSFDIVSEVDLQEVDNAVNQTVKEITTRYDFKGSKSTLTREDAVITILADDAYKLEQVTEVLKGKMVRRSVDPHFLDFGTVEPASGAMVRQNVTVKQGIESEFAKKIVKTIKNAKLKVQAAIQGDQVRVTGKKRDDLQEAIALLKSQSFEQPLQFNNFRD</sequence>